<accession>Q09224</accession>
<proteinExistence type="inferred from homology"/>
<feature type="signal peptide" evidence="1">
    <location>
        <begin position="1"/>
        <end position="18"/>
    </location>
</feature>
<feature type="chain" id="PRO_0000065048" description="Uncharacterized protein B0228.8">
    <location>
        <begin position="19"/>
        <end position="454"/>
    </location>
</feature>
<reference key="1">
    <citation type="journal article" date="1998" name="Science">
        <title>Genome sequence of the nematode C. elegans: a platform for investigating biology.</title>
        <authorList>
            <consortium name="The C. elegans sequencing consortium"/>
        </authorList>
    </citation>
    <scope>NUCLEOTIDE SEQUENCE [LARGE SCALE GENOMIC DNA]</scope>
    <source>
        <strain>Bristol N2</strain>
    </source>
</reference>
<dbReference type="EMBL" id="FO080130">
    <property type="protein sequence ID" value="CCD61452.1"/>
    <property type="molecule type" value="Genomic_DNA"/>
</dbReference>
<dbReference type="PIR" id="T29048">
    <property type="entry name" value="T29048"/>
</dbReference>
<dbReference type="RefSeq" id="NP_495630.2">
    <property type="nucleotide sequence ID" value="NM_063229.2"/>
</dbReference>
<dbReference type="FunCoup" id="Q09224">
    <property type="interactions" value="308"/>
</dbReference>
<dbReference type="STRING" id="6239.B0228.8.1"/>
<dbReference type="PaxDb" id="6239-B0228.8"/>
<dbReference type="EnsemblMetazoa" id="B0228.8.1">
    <property type="protein sequence ID" value="B0228.8.1"/>
    <property type="gene ID" value="WBGene00015065"/>
</dbReference>
<dbReference type="GeneID" id="181864"/>
<dbReference type="KEGG" id="cel:CELE_B0228.8"/>
<dbReference type="UCSC" id="B0228.8">
    <property type="organism name" value="c. elegans"/>
</dbReference>
<dbReference type="AGR" id="WB:WBGene00015065"/>
<dbReference type="CTD" id="181864"/>
<dbReference type="WormBase" id="B0228.8">
    <property type="protein sequence ID" value="CE39885"/>
    <property type="gene ID" value="WBGene00015065"/>
</dbReference>
<dbReference type="eggNOG" id="ENOG502TGFF">
    <property type="taxonomic scope" value="Eukaryota"/>
</dbReference>
<dbReference type="GeneTree" id="ENSGT00970000197679"/>
<dbReference type="HOGENOM" id="CLU_607254_0_0_1"/>
<dbReference type="InParanoid" id="Q09224"/>
<dbReference type="OMA" id="SSRRWDQ"/>
<dbReference type="OrthoDB" id="5851645at2759"/>
<dbReference type="PhylomeDB" id="Q09224"/>
<dbReference type="PRO" id="PR:Q09224"/>
<dbReference type="Proteomes" id="UP000001940">
    <property type="component" value="Chromosome II"/>
</dbReference>
<dbReference type="Bgee" id="WBGene00015065">
    <property type="expression patterns" value="Expressed in adult organism"/>
</dbReference>
<dbReference type="InterPro" id="IPR035415">
    <property type="entry name" value="DUF5382_central"/>
</dbReference>
<dbReference type="InterPro" id="IPR048313">
    <property type="entry name" value="DUF5382_N"/>
</dbReference>
<dbReference type="Pfam" id="PF17354">
    <property type="entry name" value="DUF5382"/>
    <property type="match status" value="1"/>
</dbReference>
<dbReference type="Pfam" id="PF20840">
    <property type="entry name" value="DUF5382_N"/>
    <property type="match status" value="1"/>
</dbReference>
<keyword id="KW-1185">Reference proteome</keyword>
<keyword id="KW-0732">Signal</keyword>
<evidence type="ECO:0000255" key="1"/>
<gene>
    <name type="ORF">B0228.8</name>
</gene>
<protein>
    <recommendedName>
        <fullName>Uncharacterized protein B0228.8</fullName>
    </recommendedName>
</protein>
<name>YP78_CAEEL</name>
<sequence>MRRFTLFVFFLSISIAYADFDFEDYNFATFNEIYDNEIPDDIPSSRHFLKSSRGTVGLPKTATEMMTRFNENLLNFLKSKSENDWKLIMELMSPDAFIETCMESAYGLSMDQFHKWITFLSNYYAEVGLTSTKIKDNSETGVTTELVYYTVLRNGEKGSDKWAMSATLNKKKGHFCINTLHMLSECKNIPKKPSLEPAIPIETFISSLKKKLVNDIFLNGGLHYKSAYESMYNYITPATKVFICDVGKMNGNQFVEYWYKRFGKVQTYSEHVFDISNNGTNWHVDFEVTYESEPGKFYRDRYQFSMNKYTNVKVEYFENFLDWRIYQIQQNCTESRTKMSKSDASVVKMALASRRWDQMLNKGLSWDTLQAFKEMFDKSKFHGYTCGMKFENWAKFDNWLTGFSNFYAKSVPKQTNVYAYQDSKIGFWIVNTMSAASDNSTSTHRVFFEGYYVC</sequence>
<organism>
    <name type="scientific">Caenorhabditis elegans</name>
    <dbReference type="NCBI Taxonomy" id="6239"/>
    <lineage>
        <taxon>Eukaryota</taxon>
        <taxon>Metazoa</taxon>
        <taxon>Ecdysozoa</taxon>
        <taxon>Nematoda</taxon>
        <taxon>Chromadorea</taxon>
        <taxon>Rhabditida</taxon>
        <taxon>Rhabditina</taxon>
        <taxon>Rhabditomorpha</taxon>
        <taxon>Rhabditoidea</taxon>
        <taxon>Rhabditidae</taxon>
        <taxon>Peloderinae</taxon>
        <taxon>Caenorhabditis</taxon>
    </lineage>
</organism>